<organism>
    <name type="scientific">Ciona intestinalis</name>
    <name type="common">Transparent sea squirt</name>
    <name type="synonym">Ascidia intestinalis</name>
    <dbReference type="NCBI Taxonomy" id="7719"/>
    <lineage>
        <taxon>Eukaryota</taxon>
        <taxon>Metazoa</taxon>
        <taxon>Chordata</taxon>
        <taxon>Tunicata</taxon>
        <taxon>Ascidiacea</taxon>
        <taxon>Phlebobranchia</taxon>
        <taxon>Cionidae</taxon>
        <taxon>Ciona</taxon>
    </lineage>
</organism>
<proteinExistence type="inferred from homology"/>
<evidence type="ECO:0000250" key="1"/>
<evidence type="ECO:0000255" key="2">
    <source>
        <dbReference type="HAMAP-Rule" id="MF_03046"/>
    </source>
</evidence>
<evidence type="ECO:0000256" key="3">
    <source>
        <dbReference type="SAM" id="MobiDB-lite"/>
    </source>
</evidence>
<reference key="1">
    <citation type="journal article" date="2004" name="Development">
        <title>Gene expression profiles of transcription factors and signaling molecules in the ascidian embryo: towards a comprehensive understanding of gene networks.</title>
        <authorList>
            <person name="Imai K.S."/>
            <person name="Hino K."/>
            <person name="Yagi K."/>
            <person name="Satoh N."/>
            <person name="Satou Y."/>
        </authorList>
    </citation>
    <scope>NUCLEOTIDE SEQUENCE [MRNA]</scope>
</reference>
<feature type="chain" id="PRO_0000367550" description="Transcription and mRNA export factor ENY2">
    <location>
        <begin position="1"/>
        <end position="104"/>
    </location>
</feature>
<feature type="region of interest" description="Disordered" evidence="3">
    <location>
        <begin position="1"/>
        <end position="22"/>
    </location>
</feature>
<feature type="compositionally biased region" description="Basic and acidic residues" evidence="3">
    <location>
        <begin position="1"/>
        <end position="14"/>
    </location>
</feature>
<name>ENY2_CIOIN</name>
<keyword id="KW-0010">Activator</keyword>
<keyword id="KW-0156">Chromatin regulator</keyword>
<keyword id="KW-0509">mRNA transport</keyword>
<keyword id="KW-0539">Nucleus</keyword>
<keyword id="KW-0653">Protein transport</keyword>
<keyword id="KW-1185">Reference proteome</keyword>
<keyword id="KW-0804">Transcription</keyword>
<keyword id="KW-0805">Transcription regulation</keyword>
<keyword id="KW-0811">Translocation</keyword>
<keyword id="KW-0813">Transport</keyword>
<protein>
    <recommendedName>
        <fullName evidence="2">Transcription and mRNA export factor ENY2</fullName>
    </recommendedName>
    <alternativeName>
        <fullName evidence="2">Enhancer of yellow 2 transcription factor homolog</fullName>
    </alternativeName>
</protein>
<accession>Q4H3N8</accession>
<dbReference type="EMBL" id="AB210384">
    <property type="protein sequence ID" value="BAE06389.1"/>
    <property type="molecule type" value="mRNA"/>
</dbReference>
<dbReference type="RefSeq" id="NP_001071686.1">
    <property type="nucleotide sequence ID" value="NM_001078218.1"/>
</dbReference>
<dbReference type="SMR" id="Q4H3N8"/>
<dbReference type="FunCoup" id="Q4H3N8">
    <property type="interactions" value="585"/>
</dbReference>
<dbReference type="STRING" id="7719.ENSCINP00000005631"/>
<dbReference type="Ensembl" id="ENSCINT00000005631.2">
    <property type="protein sequence ID" value="ENSCINP00000005631.2"/>
    <property type="gene ID" value="ENSCING00000002757.2"/>
</dbReference>
<dbReference type="GeneID" id="778583"/>
<dbReference type="KEGG" id="cin:778583"/>
<dbReference type="CTD" id="45848"/>
<dbReference type="eggNOG" id="KOG4479">
    <property type="taxonomic scope" value="Eukaryota"/>
</dbReference>
<dbReference type="GeneTree" id="ENSGT00390000011748"/>
<dbReference type="HOGENOM" id="CLU_134052_1_1_1"/>
<dbReference type="InParanoid" id="Q4H3N8"/>
<dbReference type="OMA" id="RLMCRNI"/>
<dbReference type="OrthoDB" id="6221744at2759"/>
<dbReference type="TreeFam" id="TF326556"/>
<dbReference type="Proteomes" id="UP000008144">
    <property type="component" value="Unassembled WGS sequence"/>
</dbReference>
<dbReference type="GO" id="GO:0071819">
    <property type="term" value="C:DUBm complex"/>
    <property type="evidence" value="ECO:0000318"/>
    <property type="project" value="GO_Central"/>
</dbReference>
<dbReference type="GO" id="GO:0005643">
    <property type="term" value="C:nuclear pore"/>
    <property type="evidence" value="ECO:0007669"/>
    <property type="project" value="UniProtKB-UniRule"/>
</dbReference>
<dbReference type="GO" id="GO:0005654">
    <property type="term" value="C:nucleoplasm"/>
    <property type="evidence" value="ECO:0007669"/>
    <property type="project" value="UniProtKB-SubCell"/>
</dbReference>
<dbReference type="GO" id="GO:0000124">
    <property type="term" value="C:SAGA complex"/>
    <property type="evidence" value="ECO:0000250"/>
    <property type="project" value="UniProtKB"/>
</dbReference>
<dbReference type="GO" id="GO:0070390">
    <property type="term" value="C:transcription export complex 2"/>
    <property type="evidence" value="ECO:0007669"/>
    <property type="project" value="UniProtKB-UniRule"/>
</dbReference>
<dbReference type="GO" id="GO:0003682">
    <property type="term" value="F:chromatin binding"/>
    <property type="evidence" value="ECO:0000318"/>
    <property type="project" value="GO_Central"/>
</dbReference>
<dbReference type="GO" id="GO:0003713">
    <property type="term" value="F:transcription coactivator activity"/>
    <property type="evidence" value="ECO:0000250"/>
    <property type="project" value="UniProtKB"/>
</dbReference>
<dbReference type="GO" id="GO:0006325">
    <property type="term" value="P:chromatin organization"/>
    <property type="evidence" value="ECO:0007669"/>
    <property type="project" value="UniProtKB-KW"/>
</dbReference>
<dbReference type="GO" id="GO:0016973">
    <property type="term" value="P:poly(A)+ mRNA export from nucleus"/>
    <property type="evidence" value="ECO:0000318"/>
    <property type="project" value="GO_Central"/>
</dbReference>
<dbReference type="GO" id="GO:0045893">
    <property type="term" value="P:positive regulation of DNA-templated transcription"/>
    <property type="evidence" value="ECO:0000250"/>
    <property type="project" value="UniProtKB"/>
</dbReference>
<dbReference type="GO" id="GO:0015031">
    <property type="term" value="P:protein transport"/>
    <property type="evidence" value="ECO:0007669"/>
    <property type="project" value="UniProtKB-KW"/>
</dbReference>
<dbReference type="GO" id="GO:0006357">
    <property type="term" value="P:regulation of transcription by RNA polymerase II"/>
    <property type="evidence" value="ECO:0000318"/>
    <property type="project" value="GO_Central"/>
</dbReference>
<dbReference type="GO" id="GO:0006368">
    <property type="term" value="P:transcription elongation by RNA polymerase II"/>
    <property type="evidence" value="ECO:0007669"/>
    <property type="project" value="UniProtKB-UniRule"/>
</dbReference>
<dbReference type="FunFam" id="1.10.246.140:FF:000001">
    <property type="entry name" value="Transcription and mRNA export factor ENY2"/>
    <property type="match status" value="1"/>
</dbReference>
<dbReference type="Gene3D" id="1.10.246.140">
    <property type="match status" value="1"/>
</dbReference>
<dbReference type="HAMAP" id="MF_03046">
    <property type="entry name" value="ENY2_Sus1"/>
    <property type="match status" value="1"/>
</dbReference>
<dbReference type="InterPro" id="IPR018783">
    <property type="entry name" value="TF_ENY2"/>
</dbReference>
<dbReference type="InterPro" id="IPR038212">
    <property type="entry name" value="TF_EnY2_sf"/>
</dbReference>
<dbReference type="PANTHER" id="PTHR12514">
    <property type="entry name" value="ENHANCER OF YELLOW 2 TRANSCRIPTION FACTOR"/>
    <property type="match status" value="1"/>
</dbReference>
<dbReference type="Pfam" id="PF10163">
    <property type="entry name" value="EnY2"/>
    <property type="match status" value="1"/>
</dbReference>
<gene>
    <name evidence="2" type="primary">ENY2</name>
</gene>
<sequence>MADYGSDKKSRDNQMRSAINQQLVETGEREKLKELLRVRLAECGWRDQLKQLCKEIVRERGLEHVSVDDLVQDITPKARQLVPDTVKKELLQKIRNFLAQQANV</sequence>
<comment type="function">
    <text evidence="1">Involved in mRNA export coupled transcription activation by association with both the TREX-2 and the SAGA complexes. The transcription regulatory histone acetylation (HAT) complex SAGA is a multiprotein complex that activates transcription by remodeling chromatin and mediating histone acetylation and deubiquitination. Within the SAGA complex, participates in a subcomplex that specifically deubiquitinates histones. The SAGA complex is recruited to specific gene promoters by activators, where it is required for transcription. The TREX-2 complex functions in docking export-competent ribonucleoprotein particles (mRNPs) to the nuclear entrance of the nuclear pore complex (nuclear basket). TREX-2 participates in mRNA export and accurate chromatin positioning in the nucleus by tethering genes to the nuclear periphery (By similarity).</text>
</comment>
<comment type="subunit">
    <text evidence="1">Component of the nuclear pore complex (NPC)-associated TREX-2 complex (transcription and export complex 2). Component of the SAGA transcription coactivator-HAT complex. Within the SAGA complex, participates in a subcomplex of SAGA called the DUB module (deubiquitination module) (By similarity).</text>
</comment>
<comment type="subcellular location">
    <subcellularLocation>
        <location evidence="2">Nucleus</location>
        <location evidence="2">Nucleoplasm</location>
    </subcellularLocation>
</comment>
<comment type="similarity">
    <text evidence="2">Belongs to the ENY2 family.</text>
</comment>